<sequence length="412" mass="46141">MAVKVNKEFCSFCGKRQDEVLILIAGPNNTYICDECVEKCYQIVRENKKTSYNFELKDIPKPEQIKKILDEYVIGQERAKKILSVAVYNHYKRIKAKEAGLSLDDVELEKSNILLIGPTGSGKTLLARTLAKILNVPFAIADATSLTEAGYVGEDVENVLVRLLQACDYDVKAAQKGIVYIDEIDKIAKKSGINPSITRDVSGEGVQQALLKIVEGSVVNVPPQGGRKHPHQEFIQVDTTDILFICGGAFVGLEDIIKQRLGKSRVGFEAEIKKVDKEQDLLELVEPDDLIRFGMIPEFIGRFPVIATLRELTEDELVRILVEPKNALVKQYQKLFELEGVKLTFTEKALREIAKEAIRRKTGARGLRAIMEDIMADIMFEVPSLPGVKEVIIDENVVKNKEKPKLIFEQAV</sequence>
<dbReference type="EMBL" id="AE000657">
    <property type="protein sequence ID" value="AAC07316.1"/>
    <property type="molecule type" value="Genomic_DNA"/>
</dbReference>
<dbReference type="PIR" id="A70416">
    <property type="entry name" value="A70416"/>
</dbReference>
<dbReference type="RefSeq" id="NP_213920.1">
    <property type="nucleotide sequence ID" value="NC_000918.1"/>
</dbReference>
<dbReference type="RefSeq" id="WP_010880858.1">
    <property type="nucleotide sequence ID" value="NC_000918.1"/>
</dbReference>
<dbReference type="SMR" id="O67356"/>
<dbReference type="FunCoup" id="O67356">
    <property type="interactions" value="332"/>
</dbReference>
<dbReference type="STRING" id="224324.aq_1337"/>
<dbReference type="EnsemblBacteria" id="AAC07316">
    <property type="protein sequence ID" value="AAC07316"/>
    <property type="gene ID" value="aq_1337"/>
</dbReference>
<dbReference type="KEGG" id="aae:aq_1337"/>
<dbReference type="PATRIC" id="fig|224324.8.peg.1045"/>
<dbReference type="eggNOG" id="COG1219">
    <property type="taxonomic scope" value="Bacteria"/>
</dbReference>
<dbReference type="HOGENOM" id="CLU_014218_8_2_0"/>
<dbReference type="InParanoid" id="O67356"/>
<dbReference type="OrthoDB" id="9804062at2"/>
<dbReference type="Proteomes" id="UP000000798">
    <property type="component" value="Chromosome"/>
</dbReference>
<dbReference type="GO" id="GO:0009376">
    <property type="term" value="C:HslUV protease complex"/>
    <property type="evidence" value="ECO:0000318"/>
    <property type="project" value="GO_Central"/>
</dbReference>
<dbReference type="GO" id="GO:0005524">
    <property type="term" value="F:ATP binding"/>
    <property type="evidence" value="ECO:0000318"/>
    <property type="project" value="GO_Central"/>
</dbReference>
<dbReference type="GO" id="GO:0016887">
    <property type="term" value="F:ATP hydrolysis activity"/>
    <property type="evidence" value="ECO:0000318"/>
    <property type="project" value="GO_Central"/>
</dbReference>
<dbReference type="GO" id="GO:0140662">
    <property type="term" value="F:ATP-dependent protein folding chaperone"/>
    <property type="evidence" value="ECO:0007669"/>
    <property type="project" value="InterPro"/>
</dbReference>
<dbReference type="GO" id="GO:0046983">
    <property type="term" value="F:protein dimerization activity"/>
    <property type="evidence" value="ECO:0007669"/>
    <property type="project" value="InterPro"/>
</dbReference>
<dbReference type="GO" id="GO:0051082">
    <property type="term" value="F:unfolded protein binding"/>
    <property type="evidence" value="ECO:0007669"/>
    <property type="project" value="UniProtKB-UniRule"/>
</dbReference>
<dbReference type="GO" id="GO:0008270">
    <property type="term" value="F:zinc ion binding"/>
    <property type="evidence" value="ECO:0007669"/>
    <property type="project" value="InterPro"/>
</dbReference>
<dbReference type="GO" id="GO:0051301">
    <property type="term" value="P:cell division"/>
    <property type="evidence" value="ECO:0000318"/>
    <property type="project" value="GO_Central"/>
</dbReference>
<dbReference type="GO" id="GO:0051603">
    <property type="term" value="P:proteolysis involved in protein catabolic process"/>
    <property type="evidence" value="ECO:0000318"/>
    <property type="project" value="GO_Central"/>
</dbReference>
<dbReference type="CDD" id="cd19497">
    <property type="entry name" value="RecA-like_ClpX"/>
    <property type="match status" value="1"/>
</dbReference>
<dbReference type="FunFam" id="1.10.8.60:FF:000002">
    <property type="entry name" value="ATP-dependent Clp protease ATP-binding subunit ClpX"/>
    <property type="match status" value="1"/>
</dbReference>
<dbReference type="FunFam" id="3.40.50.300:FF:000005">
    <property type="entry name" value="ATP-dependent Clp protease ATP-binding subunit ClpX"/>
    <property type="match status" value="1"/>
</dbReference>
<dbReference type="Gene3D" id="1.10.8.60">
    <property type="match status" value="1"/>
</dbReference>
<dbReference type="Gene3D" id="6.20.220.10">
    <property type="entry name" value="ClpX chaperone, C4-type zinc finger domain"/>
    <property type="match status" value="1"/>
</dbReference>
<dbReference type="Gene3D" id="3.40.50.300">
    <property type="entry name" value="P-loop containing nucleotide triphosphate hydrolases"/>
    <property type="match status" value="1"/>
</dbReference>
<dbReference type="HAMAP" id="MF_00175">
    <property type="entry name" value="ClpX"/>
    <property type="match status" value="1"/>
</dbReference>
<dbReference type="InterPro" id="IPR003593">
    <property type="entry name" value="AAA+_ATPase"/>
</dbReference>
<dbReference type="InterPro" id="IPR050052">
    <property type="entry name" value="ATP-dep_Clp_protease_ClpX"/>
</dbReference>
<dbReference type="InterPro" id="IPR003959">
    <property type="entry name" value="ATPase_AAA_core"/>
</dbReference>
<dbReference type="InterPro" id="IPR019489">
    <property type="entry name" value="Clp_ATPase_C"/>
</dbReference>
<dbReference type="InterPro" id="IPR004487">
    <property type="entry name" value="Clp_protease_ATP-bd_su_ClpX"/>
</dbReference>
<dbReference type="InterPro" id="IPR046425">
    <property type="entry name" value="ClpX_bact"/>
</dbReference>
<dbReference type="InterPro" id="IPR027417">
    <property type="entry name" value="P-loop_NTPase"/>
</dbReference>
<dbReference type="InterPro" id="IPR010603">
    <property type="entry name" value="Znf_CppX_C4"/>
</dbReference>
<dbReference type="InterPro" id="IPR038366">
    <property type="entry name" value="Znf_CppX_C4_sf"/>
</dbReference>
<dbReference type="NCBIfam" id="TIGR00382">
    <property type="entry name" value="clpX"/>
    <property type="match status" value="1"/>
</dbReference>
<dbReference type="NCBIfam" id="NF003745">
    <property type="entry name" value="PRK05342.1"/>
    <property type="match status" value="1"/>
</dbReference>
<dbReference type="PANTHER" id="PTHR48102:SF7">
    <property type="entry name" value="ATP-DEPENDENT CLP PROTEASE ATP-BINDING SUBUNIT CLPX-LIKE, MITOCHONDRIAL"/>
    <property type="match status" value="1"/>
</dbReference>
<dbReference type="PANTHER" id="PTHR48102">
    <property type="entry name" value="ATP-DEPENDENT CLP PROTEASE ATP-BINDING SUBUNIT CLPX-LIKE, MITOCHONDRIAL-RELATED"/>
    <property type="match status" value="1"/>
</dbReference>
<dbReference type="Pfam" id="PF07724">
    <property type="entry name" value="AAA_2"/>
    <property type="match status" value="1"/>
</dbReference>
<dbReference type="Pfam" id="PF10431">
    <property type="entry name" value="ClpB_D2-small"/>
    <property type="match status" value="1"/>
</dbReference>
<dbReference type="Pfam" id="PF06689">
    <property type="entry name" value="zf-C4_ClpX"/>
    <property type="match status" value="1"/>
</dbReference>
<dbReference type="SMART" id="SM00382">
    <property type="entry name" value="AAA"/>
    <property type="match status" value="1"/>
</dbReference>
<dbReference type="SMART" id="SM01086">
    <property type="entry name" value="ClpB_D2-small"/>
    <property type="match status" value="1"/>
</dbReference>
<dbReference type="SMART" id="SM00994">
    <property type="entry name" value="zf-C4_ClpX"/>
    <property type="match status" value="1"/>
</dbReference>
<dbReference type="SUPFAM" id="SSF57716">
    <property type="entry name" value="Glucocorticoid receptor-like (DNA-binding domain)"/>
    <property type="match status" value="1"/>
</dbReference>
<dbReference type="SUPFAM" id="SSF52540">
    <property type="entry name" value="P-loop containing nucleoside triphosphate hydrolases"/>
    <property type="match status" value="1"/>
</dbReference>
<dbReference type="PROSITE" id="PS51902">
    <property type="entry name" value="CLPX_ZB"/>
    <property type="match status" value="1"/>
</dbReference>
<proteinExistence type="inferred from homology"/>
<keyword id="KW-0067">ATP-binding</keyword>
<keyword id="KW-0143">Chaperone</keyword>
<keyword id="KW-0479">Metal-binding</keyword>
<keyword id="KW-0547">Nucleotide-binding</keyword>
<keyword id="KW-1185">Reference proteome</keyword>
<keyword id="KW-0862">Zinc</keyword>
<comment type="function">
    <text evidence="1">ATP-dependent specificity component of the Clp protease. It directs the protease to specific substrates. Can perform chaperone functions in the absence of ClpP.</text>
</comment>
<comment type="subunit">
    <text evidence="1">Component of the ClpX-ClpP complex. Forms a hexameric ring that, in the presence of ATP, binds to fourteen ClpP subunits assembled into a disk-like structure with a central cavity, resembling the structure of eukaryotic proteasomes.</text>
</comment>
<comment type="similarity">
    <text evidence="1">Belongs to the ClpX chaperone family.</text>
</comment>
<accession>O67356</accession>
<protein>
    <recommendedName>
        <fullName evidence="1">ATP-dependent Clp protease ATP-binding subunit ClpX</fullName>
    </recommendedName>
</protein>
<organism>
    <name type="scientific">Aquifex aeolicus (strain VF5)</name>
    <dbReference type="NCBI Taxonomy" id="224324"/>
    <lineage>
        <taxon>Bacteria</taxon>
        <taxon>Pseudomonadati</taxon>
        <taxon>Aquificota</taxon>
        <taxon>Aquificia</taxon>
        <taxon>Aquificales</taxon>
        <taxon>Aquificaceae</taxon>
        <taxon>Aquifex</taxon>
    </lineage>
</organism>
<name>CLPX_AQUAE</name>
<gene>
    <name evidence="1" type="primary">clpX</name>
    <name type="ordered locus">aq_1337</name>
</gene>
<feature type="chain" id="PRO_0000160301" description="ATP-dependent Clp protease ATP-binding subunit ClpX">
    <location>
        <begin position="1"/>
        <end position="412"/>
    </location>
</feature>
<feature type="domain" description="ClpX-type ZB" evidence="2">
    <location>
        <begin position="1"/>
        <end position="52"/>
    </location>
</feature>
<feature type="binding site" evidence="2">
    <location>
        <position position="10"/>
    </location>
    <ligand>
        <name>Zn(2+)</name>
        <dbReference type="ChEBI" id="CHEBI:29105"/>
    </ligand>
</feature>
<feature type="binding site" evidence="2">
    <location>
        <position position="13"/>
    </location>
    <ligand>
        <name>Zn(2+)</name>
        <dbReference type="ChEBI" id="CHEBI:29105"/>
    </ligand>
</feature>
<feature type="binding site" evidence="2">
    <location>
        <position position="33"/>
    </location>
    <ligand>
        <name>Zn(2+)</name>
        <dbReference type="ChEBI" id="CHEBI:29105"/>
    </ligand>
</feature>
<feature type="binding site" evidence="2">
    <location>
        <position position="36"/>
    </location>
    <ligand>
        <name>Zn(2+)</name>
        <dbReference type="ChEBI" id="CHEBI:29105"/>
    </ligand>
</feature>
<feature type="binding site" evidence="1">
    <location>
        <begin position="118"/>
        <end position="125"/>
    </location>
    <ligand>
        <name>ATP</name>
        <dbReference type="ChEBI" id="CHEBI:30616"/>
    </ligand>
</feature>
<reference key="1">
    <citation type="journal article" date="1998" name="Nature">
        <title>The complete genome of the hyperthermophilic bacterium Aquifex aeolicus.</title>
        <authorList>
            <person name="Deckert G."/>
            <person name="Warren P.V."/>
            <person name="Gaasterland T."/>
            <person name="Young W.G."/>
            <person name="Lenox A.L."/>
            <person name="Graham D.E."/>
            <person name="Overbeek R."/>
            <person name="Snead M.A."/>
            <person name="Keller M."/>
            <person name="Aujay M."/>
            <person name="Huber R."/>
            <person name="Feldman R.A."/>
            <person name="Short J.M."/>
            <person name="Olsen G.J."/>
            <person name="Swanson R.V."/>
        </authorList>
    </citation>
    <scope>NUCLEOTIDE SEQUENCE [LARGE SCALE GENOMIC DNA]</scope>
    <source>
        <strain>VF5</strain>
    </source>
</reference>
<evidence type="ECO:0000255" key="1">
    <source>
        <dbReference type="HAMAP-Rule" id="MF_00175"/>
    </source>
</evidence>
<evidence type="ECO:0000255" key="2">
    <source>
        <dbReference type="PROSITE-ProRule" id="PRU01250"/>
    </source>
</evidence>